<sequence length="104" mass="11344">MAAKIRRDDEVIVLTGKDKGKRGKVKNVLSASKVIVEGINLVKKHQKPVPALNQPGGIVEKEAAIQVSNIALFNAATGKADRVGFRFEDGKKVRFFKSNSETIK</sequence>
<name>RL24_YERE8</name>
<comment type="function">
    <text evidence="1">One of two assembly initiator proteins, it binds directly to the 5'-end of the 23S rRNA, where it nucleates assembly of the 50S subunit.</text>
</comment>
<comment type="function">
    <text evidence="1">One of the proteins that surrounds the polypeptide exit tunnel on the outside of the subunit.</text>
</comment>
<comment type="subunit">
    <text evidence="1">Part of the 50S ribosomal subunit.</text>
</comment>
<comment type="similarity">
    <text evidence="1">Belongs to the universal ribosomal protein uL24 family.</text>
</comment>
<organism>
    <name type="scientific">Yersinia enterocolitica serotype O:8 / biotype 1B (strain NCTC 13174 / 8081)</name>
    <dbReference type="NCBI Taxonomy" id="393305"/>
    <lineage>
        <taxon>Bacteria</taxon>
        <taxon>Pseudomonadati</taxon>
        <taxon>Pseudomonadota</taxon>
        <taxon>Gammaproteobacteria</taxon>
        <taxon>Enterobacterales</taxon>
        <taxon>Yersiniaceae</taxon>
        <taxon>Yersinia</taxon>
    </lineage>
</organism>
<accession>A1JS21</accession>
<gene>
    <name evidence="1" type="primary">rplX</name>
    <name type="ordered locus">YE3912</name>
</gene>
<protein>
    <recommendedName>
        <fullName evidence="1">Large ribosomal subunit protein uL24</fullName>
    </recommendedName>
    <alternativeName>
        <fullName evidence="2">50S ribosomal protein L24</fullName>
    </alternativeName>
</protein>
<reference key="1">
    <citation type="journal article" date="2006" name="PLoS Genet.">
        <title>The complete genome sequence and comparative genome analysis of the high pathogenicity Yersinia enterocolitica strain 8081.</title>
        <authorList>
            <person name="Thomson N.R."/>
            <person name="Howard S."/>
            <person name="Wren B.W."/>
            <person name="Holden M.T.G."/>
            <person name="Crossman L."/>
            <person name="Challis G.L."/>
            <person name="Churcher C."/>
            <person name="Mungall K."/>
            <person name="Brooks K."/>
            <person name="Chillingworth T."/>
            <person name="Feltwell T."/>
            <person name="Abdellah Z."/>
            <person name="Hauser H."/>
            <person name="Jagels K."/>
            <person name="Maddison M."/>
            <person name="Moule S."/>
            <person name="Sanders M."/>
            <person name="Whitehead S."/>
            <person name="Quail M.A."/>
            <person name="Dougan G."/>
            <person name="Parkhill J."/>
            <person name="Prentice M.B."/>
        </authorList>
    </citation>
    <scope>NUCLEOTIDE SEQUENCE [LARGE SCALE GENOMIC DNA]</scope>
    <source>
        <strain>NCTC 13174 / 8081</strain>
    </source>
</reference>
<evidence type="ECO:0000255" key="1">
    <source>
        <dbReference type="HAMAP-Rule" id="MF_01326"/>
    </source>
</evidence>
<evidence type="ECO:0000305" key="2"/>
<keyword id="KW-0687">Ribonucleoprotein</keyword>
<keyword id="KW-0689">Ribosomal protein</keyword>
<keyword id="KW-0694">RNA-binding</keyword>
<keyword id="KW-0699">rRNA-binding</keyword>
<proteinExistence type="inferred from homology"/>
<feature type="chain" id="PRO_1000052336" description="Large ribosomal subunit protein uL24">
    <location>
        <begin position="1"/>
        <end position="104"/>
    </location>
</feature>
<dbReference type="EMBL" id="AM286415">
    <property type="protein sequence ID" value="CAL13931.1"/>
    <property type="molecule type" value="Genomic_DNA"/>
</dbReference>
<dbReference type="RefSeq" id="WP_004391420.1">
    <property type="nucleotide sequence ID" value="NC_008800.1"/>
</dbReference>
<dbReference type="RefSeq" id="YP_001008057.1">
    <property type="nucleotide sequence ID" value="NC_008800.1"/>
</dbReference>
<dbReference type="SMR" id="A1JS21"/>
<dbReference type="GeneID" id="61905804"/>
<dbReference type="KEGG" id="yen:YE3912"/>
<dbReference type="PATRIC" id="fig|393305.7.peg.4162"/>
<dbReference type="eggNOG" id="COG0198">
    <property type="taxonomic scope" value="Bacteria"/>
</dbReference>
<dbReference type="HOGENOM" id="CLU_093315_2_2_6"/>
<dbReference type="OrthoDB" id="9807419at2"/>
<dbReference type="Proteomes" id="UP000000642">
    <property type="component" value="Chromosome"/>
</dbReference>
<dbReference type="GO" id="GO:1990904">
    <property type="term" value="C:ribonucleoprotein complex"/>
    <property type="evidence" value="ECO:0007669"/>
    <property type="project" value="UniProtKB-KW"/>
</dbReference>
<dbReference type="GO" id="GO:0005840">
    <property type="term" value="C:ribosome"/>
    <property type="evidence" value="ECO:0007669"/>
    <property type="project" value="UniProtKB-KW"/>
</dbReference>
<dbReference type="GO" id="GO:0019843">
    <property type="term" value="F:rRNA binding"/>
    <property type="evidence" value="ECO:0007669"/>
    <property type="project" value="UniProtKB-UniRule"/>
</dbReference>
<dbReference type="GO" id="GO:0003735">
    <property type="term" value="F:structural constituent of ribosome"/>
    <property type="evidence" value="ECO:0007669"/>
    <property type="project" value="InterPro"/>
</dbReference>
<dbReference type="GO" id="GO:0006412">
    <property type="term" value="P:translation"/>
    <property type="evidence" value="ECO:0007669"/>
    <property type="project" value="UniProtKB-UniRule"/>
</dbReference>
<dbReference type="CDD" id="cd06089">
    <property type="entry name" value="KOW_RPL26"/>
    <property type="match status" value="1"/>
</dbReference>
<dbReference type="FunFam" id="2.30.30.30:FF:000004">
    <property type="entry name" value="50S ribosomal protein L24"/>
    <property type="match status" value="1"/>
</dbReference>
<dbReference type="Gene3D" id="2.30.30.30">
    <property type="match status" value="1"/>
</dbReference>
<dbReference type="HAMAP" id="MF_01326_B">
    <property type="entry name" value="Ribosomal_uL24_B"/>
    <property type="match status" value="1"/>
</dbReference>
<dbReference type="InterPro" id="IPR005824">
    <property type="entry name" value="KOW"/>
</dbReference>
<dbReference type="InterPro" id="IPR014722">
    <property type="entry name" value="Rib_uL2_dom2"/>
</dbReference>
<dbReference type="InterPro" id="IPR003256">
    <property type="entry name" value="Ribosomal_uL24"/>
</dbReference>
<dbReference type="InterPro" id="IPR005825">
    <property type="entry name" value="Ribosomal_uL24_CS"/>
</dbReference>
<dbReference type="InterPro" id="IPR041988">
    <property type="entry name" value="Ribosomal_uL24_KOW"/>
</dbReference>
<dbReference type="InterPro" id="IPR008991">
    <property type="entry name" value="Translation_prot_SH3-like_sf"/>
</dbReference>
<dbReference type="NCBIfam" id="TIGR01079">
    <property type="entry name" value="rplX_bact"/>
    <property type="match status" value="1"/>
</dbReference>
<dbReference type="PANTHER" id="PTHR12903">
    <property type="entry name" value="MITOCHONDRIAL RIBOSOMAL PROTEIN L24"/>
    <property type="match status" value="1"/>
</dbReference>
<dbReference type="Pfam" id="PF00467">
    <property type="entry name" value="KOW"/>
    <property type="match status" value="1"/>
</dbReference>
<dbReference type="Pfam" id="PF17136">
    <property type="entry name" value="ribosomal_L24"/>
    <property type="match status" value="1"/>
</dbReference>
<dbReference type="SMART" id="SM00739">
    <property type="entry name" value="KOW"/>
    <property type="match status" value="1"/>
</dbReference>
<dbReference type="SUPFAM" id="SSF50104">
    <property type="entry name" value="Translation proteins SH3-like domain"/>
    <property type="match status" value="1"/>
</dbReference>
<dbReference type="PROSITE" id="PS01108">
    <property type="entry name" value="RIBOSOMAL_L24"/>
    <property type="match status" value="1"/>
</dbReference>